<name>RRF_SALPK</name>
<organism>
    <name type="scientific">Salmonella paratyphi A (strain AKU_12601)</name>
    <dbReference type="NCBI Taxonomy" id="554290"/>
    <lineage>
        <taxon>Bacteria</taxon>
        <taxon>Pseudomonadati</taxon>
        <taxon>Pseudomonadota</taxon>
        <taxon>Gammaproteobacteria</taxon>
        <taxon>Enterobacterales</taxon>
        <taxon>Enterobacteriaceae</taxon>
        <taxon>Salmonella</taxon>
    </lineage>
</organism>
<dbReference type="EMBL" id="FM200053">
    <property type="protein sequence ID" value="CAR58332.1"/>
    <property type="molecule type" value="Genomic_DNA"/>
</dbReference>
<dbReference type="RefSeq" id="WP_000622421.1">
    <property type="nucleotide sequence ID" value="NC_011147.1"/>
</dbReference>
<dbReference type="SMR" id="B5BAM9"/>
<dbReference type="KEGG" id="sek:SSPA0218"/>
<dbReference type="HOGENOM" id="CLU_073981_2_1_6"/>
<dbReference type="Proteomes" id="UP000001869">
    <property type="component" value="Chromosome"/>
</dbReference>
<dbReference type="GO" id="GO:0005829">
    <property type="term" value="C:cytosol"/>
    <property type="evidence" value="ECO:0007669"/>
    <property type="project" value="GOC"/>
</dbReference>
<dbReference type="GO" id="GO:0043023">
    <property type="term" value="F:ribosomal large subunit binding"/>
    <property type="evidence" value="ECO:0007669"/>
    <property type="project" value="TreeGrafter"/>
</dbReference>
<dbReference type="GO" id="GO:0002184">
    <property type="term" value="P:cytoplasmic translational termination"/>
    <property type="evidence" value="ECO:0007669"/>
    <property type="project" value="TreeGrafter"/>
</dbReference>
<dbReference type="CDD" id="cd00520">
    <property type="entry name" value="RRF"/>
    <property type="match status" value="1"/>
</dbReference>
<dbReference type="FunFam" id="1.10.132.20:FF:000001">
    <property type="entry name" value="Ribosome-recycling factor"/>
    <property type="match status" value="1"/>
</dbReference>
<dbReference type="FunFam" id="3.30.1360.40:FF:000001">
    <property type="entry name" value="Ribosome-recycling factor"/>
    <property type="match status" value="1"/>
</dbReference>
<dbReference type="Gene3D" id="3.30.1360.40">
    <property type="match status" value="1"/>
</dbReference>
<dbReference type="Gene3D" id="1.10.132.20">
    <property type="entry name" value="Ribosome-recycling factor"/>
    <property type="match status" value="1"/>
</dbReference>
<dbReference type="HAMAP" id="MF_00040">
    <property type="entry name" value="RRF"/>
    <property type="match status" value="1"/>
</dbReference>
<dbReference type="InterPro" id="IPR002661">
    <property type="entry name" value="Ribosome_recyc_fac"/>
</dbReference>
<dbReference type="InterPro" id="IPR023584">
    <property type="entry name" value="Ribosome_recyc_fac_dom"/>
</dbReference>
<dbReference type="InterPro" id="IPR036191">
    <property type="entry name" value="RRF_sf"/>
</dbReference>
<dbReference type="NCBIfam" id="TIGR00496">
    <property type="entry name" value="frr"/>
    <property type="match status" value="1"/>
</dbReference>
<dbReference type="PANTHER" id="PTHR20982:SF3">
    <property type="entry name" value="MITOCHONDRIAL RIBOSOME RECYCLING FACTOR PSEUDO 1"/>
    <property type="match status" value="1"/>
</dbReference>
<dbReference type="PANTHER" id="PTHR20982">
    <property type="entry name" value="RIBOSOME RECYCLING FACTOR"/>
    <property type="match status" value="1"/>
</dbReference>
<dbReference type="Pfam" id="PF01765">
    <property type="entry name" value="RRF"/>
    <property type="match status" value="1"/>
</dbReference>
<dbReference type="SUPFAM" id="SSF55194">
    <property type="entry name" value="Ribosome recycling factor, RRF"/>
    <property type="match status" value="1"/>
</dbReference>
<reference key="1">
    <citation type="journal article" date="2009" name="BMC Genomics">
        <title>Pseudogene accumulation in the evolutionary histories of Salmonella enterica serovars Paratyphi A and Typhi.</title>
        <authorList>
            <person name="Holt K.E."/>
            <person name="Thomson N.R."/>
            <person name="Wain J."/>
            <person name="Langridge G.C."/>
            <person name="Hasan R."/>
            <person name="Bhutta Z.A."/>
            <person name="Quail M.A."/>
            <person name="Norbertczak H."/>
            <person name="Walker D."/>
            <person name="Simmonds M."/>
            <person name="White B."/>
            <person name="Bason N."/>
            <person name="Mungall K."/>
            <person name="Dougan G."/>
            <person name="Parkhill J."/>
        </authorList>
    </citation>
    <scope>NUCLEOTIDE SEQUENCE [LARGE SCALE GENOMIC DNA]</scope>
    <source>
        <strain>AKU_12601</strain>
    </source>
</reference>
<sequence length="185" mass="20519">MISDIRKDAEVRMEKCVEAFKTQISKVRTGRASPSLLDGIVVEYYGTLTPLRQLASVTVEDSRTLKINVFDRSMGPAVEKAIMASDLGLNPSSAGTDICVPLPPLTEERRKDLTKIVRGEAEQARVAVRNVRRDANDKVKALLKDKAISEDDDRRSQEEVQKMTDAAIKKVDAALADKEAELMQF</sequence>
<gene>
    <name evidence="1" type="primary">frr</name>
    <name type="ordered locus">SSPA0218</name>
</gene>
<comment type="function">
    <text evidence="1">Responsible for the release of ribosomes from messenger RNA at the termination of protein biosynthesis. May increase the efficiency of translation by recycling ribosomes from one round of translation to another.</text>
</comment>
<comment type="subcellular location">
    <subcellularLocation>
        <location evidence="1">Cytoplasm</location>
    </subcellularLocation>
</comment>
<comment type="similarity">
    <text evidence="1">Belongs to the RRF family.</text>
</comment>
<keyword id="KW-0963">Cytoplasm</keyword>
<keyword id="KW-0648">Protein biosynthesis</keyword>
<protein>
    <recommendedName>
        <fullName evidence="1">Ribosome-recycling factor</fullName>
        <shortName evidence="1">RRF</shortName>
    </recommendedName>
    <alternativeName>
        <fullName evidence="1">Ribosome-releasing factor</fullName>
    </alternativeName>
</protein>
<evidence type="ECO:0000255" key="1">
    <source>
        <dbReference type="HAMAP-Rule" id="MF_00040"/>
    </source>
</evidence>
<accession>B5BAM9</accession>
<proteinExistence type="inferred from homology"/>
<feature type="chain" id="PRO_1000090784" description="Ribosome-recycling factor">
    <location>
        <begin position="1"/>
        <end position="185"/>
    </location>
</feature>